<comment type="function">
    <text evidence="1 5">Catalyzes the opening of the heme ring to form the open-chain tetrapyrrole biliverdin IX with the release of iron and carbon monoxide (CO).</text>
</comment>
<comment type="catalytic activity">
    <reaction evidence="1">
        <text>heme b + 3 reduced [NADPH--hemoprotein reductase] + 3 O2 = biliverdin IXalpha + CO + Fe(2+) + 3 oxidized [NADPH--hemoprotein reductase] + 3 H2O + H(+)</text>
        <dbReference type="Rhea" id="RHEA:21764"/>
        <dbReference type="Rhea" id="RHEA-COMP:11964"/>
        <dbReference type="Rhea" id="RHEA-COMP:11965"/>
        <dbReference type="ChEBI" id="CHEBI:15377"/>
        <dbReference type="ChEBI" id="CHEBI:15378"/>
        <dbReference type="ChEBI" id="CHEBI:15379"/>
        <dbReference type="ChEBI" id="CHEBI:17245"/>
        <dbReference type="ChEBI" id="CHEBI:29033"/>
        <dbReference type="ChEBI" id="CHEBI:57618"/>
        <dbReference type="ChEBI" id="CHEBI:57991"/>
        <dbReference type="ChEBI" id="CHEBI:58210"/>
        <dbReference type="ChEBI" id="CHEBI:60344"/>
        <dbReference type="EC" id="1.14.14.18"/>
    </reaction>
</comment>
<comment type="induction">
    <text evidence="2">Expressed in dark and light. Part of the bphO-bphP operon (PubMed:27621284).</text>
</comment>
<comment type="similarity">
    <text evidence="4">Belongs to the heme oxygenase family.</text>
</comment>
<evidence type="ECO:0000250" key="1">
    <source>
        <dbReference type="UniProtKB" id="O48782"/>
    </source>
</evidence>
<evidence type="ECO:0000269" key="2">
    <source>
    </source>
</evidence>
<evidence type="ECO:0000303" key="3">
    <source>
    </source>
</evidence>
<evidence type="ECO:0000305" key="4"/>
<evidence type="ECO:0000305" key="5">
    <source>
    </source>
</evidence>
<accession>A0A0H2XEA6</accession>
<keyword id="KW-0349">Heme</keyword>
<keyword id="KW-0408">Iron</keyword>
<keyword id="KW-0479">Metal-binding</keyword>
<keyword id="KW-0560">Oxidoreductase</keyword>
<protein>
    <recommendedName>
        <fullName evidence="3">Heme oxygenase</fullName>
        <ecNumber evidence="1">1.14.14.18</ecNumber>
    </recommendedName>
</protein>
<gene>
    <name type="primary">bphO</name>
    <name type="ordered locus">XC_4242</name>
</gene>
<feature type="chain" id="PRO_0000438299" description="Heme oxygenase">
    <location>
        <begin position="1"/>
        <end position="165"/>
    </location>
</feature>
<proteinExistence type="evidence at transcript level"/>
<organism>
    <name type="scientific">Xanthomonas campestris pv. campestris (strain 8004)</name>
    <dbReference type="NCBI Taxonomy" id="314565"/>
    <lineage>
        <taxon>Bacteria</taxon>
        <taxon>Pseudomonadati</taxon>
        <taxon>Pseudomonadota</taxon>
        <taxon>Gammaproteobacteria</taxon>
        <taxon>Lysobacterales</taxon>
        <taxon>Lysobacteraceae</taxon>
        <taxon>Xanthomonas</taxon>
    </lineage>
</organism>
<name>HO_XANC8</name>
<reference key="1">
    <citation type="journal article" date="2005" name="Genome Res.">
        <title>Comparative and functional genomic analyses of the pathogenicity of phytopathogen Xanthomonas campestris pv. campestris.</title>
        <authorList>
            <person name="Qian W."/>
            <person name="Jia Y."/>
            <person name="Ren S.-X."/>
            <person name="He Y.-Q."/>
            <person name="Feng J.-X."/>
            <person name="Lu L.-F."/>
            <person name="Sun Q."/>
            <person name="Ying G."/>
            <person name="Tang D.-J."/>
            <person name="Tang H."/>
            <person name="Wu W."/>
            <person name="Hao P."/>
            <person name="Wang L."/>
            <person name="Jiang B.-L."/>
            <person name="Zeng S."/>
            <person name="Gu W.-Y."/>
            <person name="Lu G."/>
            <person name="Rong L."/>
            <person name="Tian Y."/>
            <person name="Yao Z."/>
            <person name="Fu G."/>
            <person name="Chen B."/>
            <person name="Fang R."/>
            <person name="Qiang B."/>
            <person name="Chen Z."/>
            <person name="Zhao G.-P."/>
            <person name="Tang J.-L."/>
            <person name="He C."/>
        </authorList>
    </citation>
    <scope>NUCLEOTIDE SEQUENCE [LARGE SCALE GENOMIC DNA]</scope>
    <source>
        <strain>8004</strain>
    </source>
</reference>
<reference key="2">
    <citation type="journal article" date="2016" name="EMBO Rep.">
        <title>Xanthomonas campestris attenuates virulence by sensing light through a bacteriophytochrome photoreceptor.</title>
        <authorList>
            <person name="Bonomi H.R."/>
            <person name="Toum L."/>
            <person name="Sycz G."/>
            <person name="Sieira R."/>
            <person name="Toscani A.M."/>
            <person name="Gudesblat G.E."/>
            <person name="Leskow F.C."/>
            <person name="Goldbaum F.A."/>
            <person name="Vojnov A.A."/>
            <person name="Malamud F."/>
        </authorList>
    </citation>
    <scope>INDUCTION</scope>
    <scope>OPERON</scope>
    <source>
        <strain>8004</strain>
    </source>
</reference>
<sequence>MMQALGQGHIDADTYAQVLRRHHRLLAGFEEQLSDWLVTLVGSGWQYRRRVPALREDLRVLGQPVDAAVPPPASSEAARWGMLYVIEGSQLGGRVIARMLRKRQPGLAHALHYFELADEDPAGWRRFQAVLEQRLQSAAARADAIAGAQAMFAHFHTCLAAEARP</sequence>
<dbReference type="EC" id="1.14.14.18" evidence="1"/>
<dbReference type="EMBL" id="CP000050">
    <property type="protein sequence ID" value="AAY51280.1"/>
    <property type="molecule type" value="Genomic_DNA"/>
</dbReference>
<dbReference type="SMR" id="A0A0H2XEA6"/>
<dbReference type="KEGG" id="xcb:XC_4242"/>
<dbReference type="HOGENOM" id="CLU_085041_4_0_6"/>
<dbReference type="Proteomes" id="UP000000420">
    <property type="component" value="Chromosome"/>
</dbReference>
<dbReference type="GO" id="GO:0004392">
    <property type="term" value="F:heme oxygenase (decyclizing) activity"/>
    <property type="evidence" value="ECO:0007669"/>
    <property type="project" value="UniProtKB-EC"/>
</dbReference>
<dbReference type="GO" id="GO:0046872">
    <property type="term" value="F:metal ion binding"/>
    <property type="evidence" value="ECO:0007669"/>
    <property type="project" value="UniProtKB-KW"/>
</dbReference>
<dbReference type="GO" id="GO:0006788">
    <property type="term" value="P:heme oxidation"/>
    <property type="evidence" value="ECO:0007669"/>
    <property type="project" value="InterPro"/>
</dbReference>
<dbReference type="CDD" id="cd19166">
    <property type="entry name" value="HemeO-bac"/>
    <property type="match status" value="1"/>
</dbReference>
<dbReference type="Gene3D" id="1.20.910.10">
    <property type="entry name" value="Heme oxygenase-like"/>
    <property type="match status" value="1"/>
</dbReference>
<dbReference type="InterPro" id="IPR016053">
    <property type="entry name" value="Haem_Oase-like"/>
</dbReference>
<dbReference type="InterPro" id="IPR016084">
    <property type="entry name" value="Haem_Oase-like_multi-hlx"/>
</dbReference>
<dbReference type="Pfam" id="PF01126">
    <property type="entry name" value="Heme_oxygenase"/>
    <property type="match status" value="1"/>
</dbReference>
<dbReference type="SUPFAM" id="SSF48613">
    <property type="entry name" value="Heme oxygenase-like"/>
    <property type="match status" value="1"/>
</dbReference>